<organism>
    <name type="scientific">Aspergillus fumigatus (strain CBS 144.89 / FGSC A1163 / CEA10)</name>
    <name type="common">Neosartorya fumigata</name>
    <dbReference type="NCBI Taxonomy" id="451804"/>
    <lineage>
        <taxon>Eukaryota</taxon>
        <taxon>Fungi</taxon>
        <taxon>Dikarya</taxon>
        <taxon>Ascomycota</taxon>
        <taxon>Pezizomycotina</taxon>
        <taxon>Eurotiomycetes</taxon>
        <taxon>Eurotiomycetidae</taxon>
        <taxon>Eurotiales</taxon>
        <taxon>Aspergillaceae</taxon>
        <taxon>Aspergillus</taxon>
        <taxon>Aspergillus subgen. Fumigati</taxon>
    </lineage>
</organism>
<comment type="function">
    <text evidence="1">Beta-glucosidases are one of a number of cellulolytic enzymes involved in the degradation of cellulosic biomass. Catalyzes the last step releasing glucose from the inhibitory cellobiose (By similarity).</text>
</comment>
<comment type="catalytic activity">
    <reaction>
        <text>Hydrolysis of terminal, non-reducing beta-D-glucosyl residues with release of beta-D-glucose.</text>
        <dbReference type="EC" id="3.2.1.21"/>
    </reaction>
</comment>
<comment type="pathway">
    <text>Glycan metabolism; cellulose degradation.</text>
</comment>
<comment type="subcellular location">
    <subcellularLocation>
        <location evidence="1">Secreted</location>
    </subcellularLocation>
</comment>
<comment type="similarity">
    <text evidence="4">Belongs to the glycosyl hydrolase 3 family.</text>
</comment>
<feature type="chain" id="PRO_0000394877" description="Probable beta-glucosidase H">
    <location>
        <begin position="1"/>
        <end position="829"/>
    </location>
</feature>
<feature type="domain" description="PA14" evidence="3">
    <location>
        <begin position="389"/>
        <end position="548"/>
    </location>
</feature>
<feature type="active site" evidence="1">
    <location>
        <position position="225"/>
    </location>
</feature>
<feature type="glycosylation site" description="N-linked (GlcNAc...) asparagine" evidence="2">
    <location>
        <position position="13"/>
    </location>
</feature>
<feature type="glycosylation site" description="N-linked (GlcNAc...) asparagine" evidence="2">
    <location>
        <position position="304"/>
    </location>
</feature>
<feature type="glycosylation site" description="N-linked (GlcNAc...) asparagine" evidence="2">
    <location>
        <position position="473"/>
    </location>
</feature>
<feature type="glycosylation site" description="N-linked (GlcNAc...) asparagine" evidence="2">
    <location>
        <position position="602"/>
    </location>
</feature>
<feature type="glycosylation site" description="N-linked (GlcNAc...) asparagine" evidence="2">
    <location>
        <position position="627"/>
    </location>
</feature>
<feature type="glycosylation site" description="N-linked (GlcNAc...) asparagine" evidence="2">
    <location>
        <position position="664"/>
    </location>
</feature>
<feature type="glycosylation site" description="N-linked (GlcNAc...) asparagine" evidence="2">
    <location>
        <position position="749"/>
    </location>
</feature>
<keyword id="KW-0119">Carbohydrate metabolism</keyword>
<keyword id="KW-0136">Cellulose degradation</keyword>
<keyword id="KW-0325">Glycoprotein</keyword>
<keyword id="KW-0326">Glycosidase</keyword>
<keyword id="KW-0378">Hydrolase</keyword>
<keyword id="KW-0624">Polysaccharide degradation</keyword>
<keyword id="KW-0964">Secreted</keyword>
<name>BGLH_ASPFC</name>
<evidence type="ECO:0000250" key="1"/>
<evidence type="ECO:0000255" key="2"/>
<evidence type="ECO:0000255" key="3">
    <source>
        <dbReference type="PROSITE-ProRule" id="PRU01164"/>
    </source>
</evidence>
<evidence type="ECO:0000305" key="4"/>
<protein>
    <recommendedName>
        <fullName>Probable beta-glucosidase H</fullName>
        <ecNumber>3.2.1.21</ecNumber>
    </recommendedName>
    <alternativeName>
        <fullName>Beta-D-glucoside glucohydrolase H</fullName>
    </alternativeName>
    <alternativeName>
        <fullName>Cellobiase H</fullName>
    </alternativeName>
    <alternativeName>
        <fullName>Gentiobiase H</fullName>
    </alternativeName>
</protein>
<proteinExistence type="inferred from homology"/>
<gene>
    <name type="primary">bglH</name>
    <name type="ORF">AFUB_000280</name>
</gene>
<reference key="1">
    <citation type="journal article" date="2008" name="PLoS Genet.">
        <title>Genomic islands in the pathogenic filamentous fungus Aspergillus fumigatus.</title>
        <authorList>
            <person name="Fedorova N.D."/>
            <person name="Khaldi N."/>
            <person name="Joardar V.S."/>
            <person name="Maiti R."/>
            <person name="Amedeo P."/>
            <person name="Anderson M.J."/>
            <person name="Crabtree J."/>
            <person name="Silva J.C."/>
            <person name="Badger J.H."/>
            <person name="Albarraq A."/>
            <person name="Angiuoli S."/>
            <person name="Bussey H."/>
            <person name="Bowyer P."/>
            <person name="Cotty P.J."/>
            <person name="Dyer P.S."/>
            <person name="Egan A."/>
            <person name="Galens K."/>
            <person name="Fraser-Liggett C.M."/>
            <person name="Haas B.J."/>
            <person name="Inman J.M."/>
            <person name="Kent R."/>
            <person name="Lemieux S."/>
            <person name="Malavazi I."/>
            <person name="Orvis J."/>
            <person name="Roemer T."/>
            <person name="Ronning C.M."/>
            <person name="Sundaram J.P."/>
            <person name="Sutton G."/>
            <person name="Turner G."/>
            <person name="Venter J.C."/>
            <person name="White O.R."/>
            <person name="Whitty B.R."/>
            <person name="Youngman P."/>
            <person name="Wolfe K.H."/>
            <person name="Goldman G.H."/>
            <person name="Wortman J.R."/>
            <person name="Jiang B."/>
            <person name="Denning D.W."/>
            <person name="Nierman W.C."/>
        </authorList>
    </citation>
    <scope>NUCLEOTIDE SEQUENCE [LARGE SCALE GENOMIC DNA]</scope>
    <source>
        <strain>CBS 144.89 / FGSC A1163 / CEA10</strain>
    </source>
</reference>
<dbReference type="EC" id="3.2.1.21"/>
<dbReference type="EMBL" id="DS499594">
    <property type="protein sequence ID" value="EDP55338.1"/>
    <property type="molecule type" value="Genomic_DNA"/>
</dbReference>
<dbReference type="SMR" id="B0XM94"/>
<dbReference type="GlyCosmos" id="B0XM94">
    <property type="glycosylation" value="7 sites, No reported glycans"/>
</dbReference>
<dbReference type="EnsemblFungi" id="EDP55338">
    <property type="protein sequence ID" value="EDP55338"/>
    <property type="gene ID" value="AFUB_000280"/>
</dbReference>
<dbReference type="VEuPathDB" id="FungiDB:AFUB_000280"/>
<dbReference type="HOGENOM" id="CLU_004542_4_0_1"/>
<dbReference type="OrthoDB" id="28504at5052"/>
<dbReference type="PhylomeDB" id="B0XM94"/>
<dbReference type="UniPathway" id="UPA00696"/>
<dbReference type="Proteomes" id="UP000001699">
    <property type="component" value="Unassembled WGS sequence"/>
</dbReference>
<dbReference type="GO" id="GO:0005576">
    <property type="term" value="C:extracellular region"/>
    <property type="evidence" value="ECO:0007669"/>
    <property type="project" value="UniProtKB-SubCell"/>
</dbReference>
<dbReference type="GO" id="GO:0008422">
    <property type="term" value="F:beta-glucosidase activity"/>
    <property type="evidence" value="ECO:0007669"/>
    <property type="project" value="UniProtKB-EC"/>
</dbReference>
<dbReference type="GO" id="GO:0030245">
    <property type="term" value="P:cellulose catabolic process"/>
    <property type="evidence" value="ECO:0007669"/>
    <property type="project" value="UniProtKB-UniPathway"/>
</dbReference>
<dbReference type="FunFam" id="3.20.20.300:FF:000006">
    <property type="entry name" value="Beta-glucosidase H"/>
    <property type="match status" value="1"/>
</dbReference>
<dbReference type="FunFam" id="2.60.40.10:FF:000495">
    <property type="entry name" value="Periplasmic beta-glucosidase"/>
    <property type="match status" value="1"/>
</dbReference>
<dbReference type="FunFam" id="2.60.120.260:FF:000155">
    <property type="entry name" value="Probable beta-glucosidase H"/>
    <property type="match status" value="1"/>
</dbReference>
<dbReference type="Gene3D" id="2.60.120.260">
    <property type="entry name" value="Galactose-binding domain-like"/>
    <property type="match status" value="1"/>
</dbReference>
<dbReference type="Gene3D" id="3.40.50.1700">
    <property type="entry name" value="Glycoside hydrolase family 3 C-terminal domain"/>
    <property type="match status" value="1"/>
</dbReference>
<dbReference type="Gene3D" id="3.20.20.300">
    <property type="entry name" value="Glycoside hydrolase, family 3, N-terminal domain"/>
    <property type="match status" value="1"/>
</dbReference>
<dbReference type="Gene3D" id="2.60.40.10">
    <property type="entry name" value="Immunoglobulins"/>
    <property type="match status" value="1"/>
</dbReference>
<dbReference type="InterPro" id="IPR050288">
    <property type="entry name" value="Cellulose_deg_GH3"/>
</dbReference>
<dbReference type="InterPro" id="IPR026891">
    <property type="entry name" value="Fn3-like"/>
</dbReference>
<dbReference type="InterPro" id="IPR002772">
    <property type="entry name" value="Glyco_hydro_3_C"/>
</dbReference>
<dbReference type="InterPro" id="IPR036881">
    <property type="entry name" value="Glyco_hydro_3_C_sf"/>
</dbReference>
<dbReference type="InterPro" id="IPR001764">
    <property type="entry name" value="Glyco_hydro_3_N"/>
</dbReference>
<dbReference type="InterPro" id="IPR036962">
    <property type="entry name" value="Glyco_hydro_3_N_sf"/>
</dbReference>
<dbReference type="InterPro" id="IPR017853">
    <property type="entry name" value="Glycoside_hydrolase_SF"/>
</dbReference>
<dbReference type="InterPro" id="IPR013783">
    <property type="entry name" value="Ig-like_fold"/>
</dbReference>
<dbReference type="InterPro" id="IPR037524">
    <property type="entry name" value="PA14/GLEYA"/>
</dbReference>
<dbReference type="InterPro" id="IPR011658">
    <property type="entry name" value="PA14_dom"/>
</dbReference>
<dbReference type="PANTHER" id="PTHR42715">
    <property type="entry name" value="BETA-GLUCOSIDASE"/>
    <property type="match status" value="1"/>
</dbReference>
<dbReference type="PANTHER" id="PTHR42715:SF17">
    <property type="entry name" value="BETA-GLUCOSIDASE H-RELATED"/>
    <property type="match status" value="1"/>
</dbReference>
<dbReference type="Pfam" id="PF14310">
    <property type="entry name" value="Fn3-like"/>
    <property type="match status" value="1"/>
</dbReference>
<dbReference type="Pfam" id="PF00933">
    <property type="entry name" value="Glyco_hydro_3"/>
    <property type="match status" value="1"/>
</dbReference>
<dbReference type="Pfam" id="PF01915">
    <property type="entry name" value="Glyco_hydro_3_C"/>
    <property type="match status" value="1"/>
</dbReference>
<dbReference type="Pfam" id="PF07691">
    <property type="entry name" value="PA14"/>
    <property type="match status" value="1"/>
</dbReference>
<dbReference type="PRINTS" id="PR00133">
    <property type="entry name" value="GLHYDRLASE3"/>
</dbReference>
<dbReference type="SMART" id="SM01217">
    <property type="entry name" value="Fn3_like"/>
    <property type="match status" value="1"/>
</dbReference>
<dbReference type="SMART" id="SM00758">
    <property type="entry name" value="PA14"/>
    <property type="match status" value="1"/>
</dbReference>
<dbReference type="SUPFAM" id="SSF51445">
    <property type="entry name" value="(Trans)glycosidases"/>
    <property type="match status" value="1"/>
</dbReference>
<dbReference type="SUPFAM" id="SSF56988">
    <property type="entry name" value="Anthrax protective antigen"/>
    <property type="match status" value="1"/>
</dbReference>
<dbReference type="SUPFAM" id="SSF52279">
    <property type="entry name" value="Beta-D-glucan exohydrolase, C-terminal domain"/>
    <property type="match status" value="1"/>
</dbReference>
<dbReference type="PROSITE" id="PS51820">
    <property type="entry name" value="PA14"/>
    <property type="match status" value="1"/>
</dbReference>
<accession>B0XM94</accession>
<sequence length="829" mass="91020">MTPKFDIDYVLANITEDDKIALLSGSDFWHTHAIPKFNVPPIRTTDGPNGIRGTKFFAGVPAACLPCGTALGATWDRDLLHQAGVLLGKECLAKGAHCWLGPTINMQRSPLGGRGFESFAEDPHLSGIMAKSIILGCESTGVISTVKHYVGNDQEHERRAVDVLVTPRALREIYLRPFQIVARDAHPGALMTSYNKINGKHVVENPAMLDIVRKDWHWDPLIMSDWLGTYTTIDSLNAGLDLEMPGPTRYRGKYIESAMQARLIKQSTISKRARKVLEFVERASRAPVSADETGRDFPEDRALNRTLCANSIVLLKNDGNLLPIPKTVKKIALIGSHVKTPAISGGGSASLEPYYAVSLYDAVVEALPDAEILYEAGAYAHRMLPVIDRMLSNAVIHFYNEPPEKERTLLATEPVVNTAFQLMDYNAPGLNRALFWATLIGEFTPDVSGLWDFGLTVFGTATLFIDDEMVIDNATRQTRGTAFFGKGTVQEVGQKQLTAGQTYKIRIEFGSANTSPMKAIGVVHFGGGAAHLGACLHMDPEQMVANAVRVAAEADYTIVCTGLNRDWESEGFDRPDMDLPPGIDALISSVLDVAADRTVIVNQSGTPVTMPWAHRARGIVQAWYGGNETGHGIADVLFGDVNPSGKLPLSWPADVRHNPTYLNNMSVGGRMLYGEDVYIGYRFYEKVGREVLFPFGHGLSYTTFHVSPEATVSPIVFSSDSPPTATVLVKNTGPMAGAQTLQLYIAAPNSTTPRPVKELHGFTKVFLQSGEERSVSIHIDRYATSFWDEIEDMWKSEEGVYQVLIGTSSQEIVSRGEFRVEQTRYWRGV</sequence>